<accession>A0AAW1HA02</accession>
<comment type="function">
    <text evidence="4">Component of the oleanane-type triterpene saponins (e.g. saponarioside A and saponarioside B) biosynthetic pathway, leading to the production of natural products with detergent properties used as traditional sources of soap (PubMed:39043959). Glycosyltransferase that mediates the conversion of quillaic acid (QA) to QA-mono via the initiation of the C-3 sugar chain (PubMed:39043959).</text>
</comment>
<comment type="pathway">
    <text evidence="4">Secondary metabolite biosynthesis; terpenoid biosynthesis.</text>
</comment>
<comment type="subcellular location">
    <subcellularLocation>
        <location evidence="6">Golgi apparatus membrane</location>
        <topology evidence="2">Multi-pass membrane protein</topology>
    </subcellularLocation>
</comment>
<comment type="tissue specificity">
    <text evidence="4">Mainly expressed in flowers and flower buds and, to a lesser extent, in leaves, stems and roots.</text>
</comment>
<comment type="biotechnology">
    <text evidence="5">Soapwort saponins possess anticancer properties and are also being explored as enhancers for endosomal escape in targeted tumor therapies (PubMed:39043959). They may also serve as precursors for vaccine adjuvants (PubMed:39043959).</text>
</comment>
<comment type="similarity">
    <text evidence="6">Belongs to the glycosyltransferase 2 family. Plant cellulose synthase-like G subfamily.</text>
</comment>
<name>CSL1_SAPOF</name>
<dbReference type="EC" id="2.4.1.-" evidence="4"/>
<dbReference type="EMBL" id="OR426404">
    <property type="protein sequence ID" value="WWM48157.1"/>
    <property type="molecule type" value="mRNA"/>
</dbReference>
<dbReference type="EMBL" id="JBDFQZ010000012">
    <property type="protein sequence ID" value="KAK9672824.1"/>
    <property type="molecule type" value="Genomic_DNA"/>
</dbReference>
<dbReference type="UniPathway" id="UPA00213"/>
<dbReference type="Proteomes" id="UP001443914">
    <property type="component" value="Unassembled WGS sequence"/>
</dbReference>
<dbReference type="GO" id="GO:0012505">
    <property type="term" value="C:endomembrane system"/>
    <property type="evidence" value="ECO:0007669"/>
    <property type="project" value="UniProtKB-SubCell"/>
</dbReference>
<dbReference type="GO" id="GO:0016020">
    <property type="term" value="C:membrane"/>
    <property type="evidence" value="ECO:0007669"/>
    <property type="project" value="UniProtKB-KW"/>
</dbReference>
<dbReference type="GO" id="GO:0016760">
    <property type="term" value="F:cellulose synthase (UDP-forming) activity"/>
    <property type="evidence" value="ECO:0007669"/>
    <property type="project" value="InterPro"/>
</dbReference>
<dbReference type="GO" id="GO:0016757">
    <property type="term" value="F:glycosyltransferase activity"/>
    <property type="evidence" value="ECO:0000314"/>
    <property type="project" value="UniProtKB"/>
</dbReference>
<dbReference type="GO" id="GO:0071555">
    <property type="term" value="P:cell wall organization"/>
    <property type="evidence" value="ECO:0007669"/>
    <property type="project" value="UniProtKB-KW"/>
</dbReference>
<dbReference type="GO" id="GO:0030244">
    <property type="term" value="P:cellulose biosynthetic process"/>
    <property type="evidence" value="ECO:0007669"/>
    <property type="project" value="InterPro"/>
</dbReference>
<dbReference type="GO" id="GO:0070085">
    <property type="term" value="P:glycosylation"/>
    <property type="evidence" value="ECO:0000314"/>
    <property type="project" value="UniProtKB"/>
</dbReference>
<dbReference type="GO" id="GO:0016135">
    <property type="term" value="P:saponin biosynthetic process"/>
    <property type="evidence" value="ECO:0000314"/>
    <property type="project" value="UniProtKB"/>
</dbReference>
<dbReference type="GO" id="GO:0016104">
    <property type="term" value="P:triterpenoid biosynthetic process"/>
    <property type="evidence" value="ECO:0000314"/>
    <property type="project" value="UniProtKB"/>
</dbReference>
<dbReference type="Gene3D" id="3.90.550.10">
    <property type="entry name" value="Spore Coat Polysaccharide Biosynthesis Protein SpsA, Chain A"/>
    <property type="match status" value="2"/>
</dbReference>
<dbReference type="InterPro" id="IPR005150">
    <property type="entry name" value="Cellulose_synth"/>
</dbReference>
<dbReference type="InterPro" id="IPR029044">
    <property type="entry name" value="Nucleotide-diphossugar_trans"/>
</dbReference>
<dbReference type="PANTHER" id="PTHR13301">
    <property type="entry name" value="X-BOX TRANSCRIPTION FACTOR-RELATED"/>
    <property type="match status" value="1"/>
</dbReference>
<dbReference type="Pfam" id="PF03552">
    <property type="entry name" value="Cellulose_synt"/>
    <property type="match status" value="2"/>
</dbReference>
<dbReference type="SUPFAM" id="SSF53448">
    <property type="entry name" value="Nucleotide-diphospho-sugar transferases"/>
    <property type="match status" value="1"/>
</dbReference>
<reference evidence="9" key="1">
    <citation type="journal article" date="2025" name="Nat. Chem. Biol.">
        <title>Unlocking saponin biosynthesis in soapwort.</title>
        <authorList>
            <person name="Jo S."/>
            <person name="El-Demerdash A."/>
            <person name="Owen C."/>
            <person name="Srivastava V."/>
            <person name="Wu D."/>
            <person name="Kikuchi S."/>
            <person name="Reed J."/>
            <person name="Hodgson H."/>
            <person name="Harkess A."/>
            <person name="Shu S."/>
            <person name="Plott C."/>
            <person name="Jenkins J."/>
            <person name="Williams M."/>
            <person name="Boston L.-B."/>
            <person name="Lacchini E."/>
            <person name="Qu T."/>
            <person name="Goossens A."/>
            <person name="Grimwood J."/>
            <person name="Schmutz J."/>
            <person name="Leebens-Mack J."/>
            <person name="Osbourn A."/>
        </authorList>
    </citation>
    <scope>NUCLEOTIDE SEQUENCE [MRNA]</scope>
    <scope>FUNCTION</scope>
    <scope>CATALYTIC ACTIVITY</scope>
    <scope>TISSUE SPECIFICITY</scope>
    <scope>PATHWAY</scope>
    <scope>BIOTECHNOLOGY</scope>
</reference>
<reference evidence="8" key="2">
    <citation type="submission" date="2024-03" db="EMBL/GenBank/DDBJ databases">
        <title>WGS assembly of Saponaria officinalis var. Norfolk2.</title>
        <authorList>
            <person name="Jenkins J."/>
            <person name="Shu S."/>
            <person name="Grimwood J."/>
            <person name="Barry K."/>
            <person name="Goodstein D."/>
            <person name="Schmutz J."/>
            <person name="Leebens-Mack J."/>
            <person name="Osbourn A."/>
        </authorList>
    </citation>
    <scope>NUCLEOTIDE SEQUENCE [LARGE SCALE GENOMIC DNA]</scope>
    <source>
        <strain>cv. Norfolk2</strain>
        <tissue>Leaf</tissue>
    </source>
</reference>
<keyword id="KW-0961">Cell wall biogenesis/degradation</keyword>
<keyword id="KW-0325">Glycoprotein</keyword>
<keyword id="KW-0328">Glycosyltransferase</keyword>
<keyword id="KW-0333">Golgi apparatus</keyword>
<keyword id="KW-0472">Membrane</keyword>
<keyword id="KW-0808">Transferase</keyword>
<keyword id="KW-0812">Transmembrane</keyword>
<keyword id="KW-1133">Transmembrane helix</keyword>
<gene>
    <name evidence="5" type="primary">CSL1</name>
    <name evidence="5" type="synonym">Saoffv11064433m</name>
    <name evidence="8" type="ORF">RND81_12G127200</name>
</gene>
<protein>
    <recommendedName>
        <fullName evidence="7">Quillaic acid 3-O-glycosyltransferase CSL1</fullName>
        <ecNumber evidence="4">2.4.1.-</ecNumber>
    </recommendedName>
    <alternativeName>
        <fullName evidence="5">Cellulose synthase-like protein 1</fullName>
        <shortName evidence="5">SoCSL1</shortName>
    </alternativeName>
</protein>
<evidence type="ECO:0000250" key="1">
    <source>
        <dbReference type="UniProtKB" id="Q941L0"/>
    </source>
</evidence>
<evidence type="ECO:0000255" key="2"/>
<evidence type="ECO:0000255" key="3">
    <source>
        <dbReference type="PROSITE-ProRule" id="PRU00498"/>
    </source>
</evidence>
<evidence type="ECO:0000269" key="4">
    <source>
    </source>
</evidence>
<evidence type="ECO:0000303" key="5">
    <source>
    </source>
</evidence>
<evidence type="ECO:0000305" key="6"/>
<evidence type="ECO:0000305" key="7">
    <source>
    </source>
</evidence>
<evidence type="ECO:0000312" key="8">
    <source>
        <dbReference type="EMBL" id="KAK9672824.1"/>
    </source>
</evidence>
<evidence type="ECO:0000312" key="9">
    <source>
        <dbReference type="EMBL" id="WWM48157.1"/>
    </source>
</evidence>
<proteinExistence type="evidence at protein level"/>
<organism>
    <name type="scientific">Saponaria officinalis</name>
    <name type="common">Common soapwort</name>
    <name type="synonym">Lychnis saponaria</name>
    <dbReference type="NCBI Taxonomy" id="3572"/>
    <lineage>
        <taxon>Eukaryota</taxon>
        <taxon>Viridiplantae</taxon>
        <taxon>Streptophyta</taxon>
        <taxon>Embryophyta</taxon>
        <taxon>Tracheophyta</taxon>
        <taxon>Spermatophyta</taxon>
        <taxon>Magnoliopsida</taxon>
        <taxon>eudicotyledons</taxon>
        <taxon>Gunneridae</taxon>
        <taxon>Pentapetalae</taxon>
        <taxon>Caryophyllales</taxon>
        <taxon>Caryophyllaceae</taxon>
        <taxon>Caryophylleae</taxon>
        <taxon>Saponaria</taxon>
    </lineage>
</organism>
<feature type="chain" id="PRO_0000462364" description="Quillaic acid 3-O-glycosyltransferase CSL1">
    <location>
        <begin position="1"/>
        <end position="698"/>
    </location>
</feature>
<feature type="transmembrane region" description="Helical" evidence="2">
    <location>
        <begin position="14"/>
        <end position="34"/>
    </location>
</feature>
<feature type="transmembrane region" description="Helical" evidence="2">
    <location>
        <begin position="42"/>
        <end position="62"/>
    </location>
</feature>
<feature type="transmembrane region" description="Helical" evidence="2">
    <location>
        <begin position="478"/>
        <end position="498"/>
    </location>
</feature>
<feature type="transmembrane region" description="Helical" evidence="2">
    <location>
        <begin position="508"/>
        <end position="528"/>
    </location>
</feature>
<feature type="transmembrane region" description="Helical" evidence="2">
    <location>
        <begin position="546"/>
        <end position="566"/>
    </location>
</feature>
<feature type="transmembrane region" description="Helical" evidence="2">
    <location>
        <begin position="581"/>
        <end position="601"/>
    </location>
</feature>
<feature type="transmembrane region" description="Helical" evidence="2">
    <location>
        <begin position="636"/>
        <end position="656"/>
    </location>
</feature>
<feature type="transmembrane region" description="Helical" evidence="2">
    <location>
        <begin position="669"/>
        <end position="689"/>
    </location>
</feature>
<feature type="active site" evidence="2">
    <location>
        <position position="129"/>
    </location>
</feature>
<feature type="active site" evidence="2">
    <location>
        <position position="436"/>
    </location>
</feature>
<feature type="binding site" evidence="1">
    <location>
        <position position="99"/>
    </location>
    <ligand>
        <name>UDP-alpha-D-glucose</name>
        <dbReference type="ChEBI" id="CHEBI:58885"/>
    </ligand>
</feature>
<feature type="binding site" evidence="1">
    <location>
        <position position="100"/>
    </location>
    <ligand>
        <name>UDP-alpha-D-glucose</name>
        <dbReference type="ChEBI" id="CHEBI:58885"/>
    </ligand>
</feature>
<feature type="glycosylation site" description="N-linked (GlcNAc...) asparagine" evidence="3">
    <location>
        <position position="38"/>
    </location>
</feature>
<feature type="glycosylation site" description="N-linked (GlcNAc...) asparagine" evidence="3">
    <location>
        <position position="317"/>
    </location>
</feature>
<sequence length="698" mass="78602">MSPHNTCTLQITRALLSRLHILFHSALVASVFYYRFSNFSSGPAWALMTFAELTLAFIWALTQAFRWRPVVRAVFGPEEIDPAQLPGLDVFICTADPRKEPVMEVMNSVVSALALDYPAEKLAVYLSDDGGSPLTREVIREAAVFGKYWVGFCGKYNVKTRCPEAYFSSFCDGERVDHNQDYLNDELSVKSKFEAFKKYVQKASEDATKCIVVNDRPSCVEIIHDSKQNGEGEVKMPLLVYVAREKRPGFNHHAKAGAINTLLRVSGLLSNSPFFLVLDCDMYCNDPTSARQAMCFHLDPKLAPSLAFVQYPQIFYNTSKNDIYDGQARAAFKTKYQGMDGLRGPVMSGTGYFLKRKALYGKPHDQDELLREQPTKAFGSSKIFIASLGENTCVALKGLSKDELLQETQKLAACTYESNTLWGSEVGYSYDCLLESTYCGYLLHCKGWISVYLYPKKPCFLGCATVDMNDAMLQIMKWTSGLIGVGISKFSPFTYAMSRISIMQSLCYAYFAFSGLFAVFFLIYGVVLPYSLLQGVPLFPKAGDPWLLAFAGVFISSLLQHLYEVLSSGETVKAWWNEQRIWIIKSITACLFGLLDAMLNKIGVLKASFRLTNKAVDKQKLDKYEKGRFDFQGAQMFMVPLMILVVFNLVSFFGGLRRTVIHKNYEDMFAQLFLSLFILALSYPIMEEIVRKARKGRS</sequence>